<proteinExistence type="inferred from homology"/>
<comment type="function">
    <text evidence="1">Involved in unsaturated fatty acids biosynthesis. Catalyzes the dehydration of short chain beta-hydroxyacyl-ACPs and long chain saturated and unsaturated beta-hydroxyacyl-ACPs.</text>
</comment>
<comment type="catalytic activity">
    <reaction evidence="1">
        <text>a (3R)-hydroxyacyl-[ACP] = a (2E)-enoyl-[ACP] + H2O</text>
        <dbReference type="Rhea" id="RHEA:13097"/>
        <dbReference type="Rhea" id="RHEA-COMP:9925"/>
        <dbReference type="Rhea" id="RHEA-COMP:9945"/>
        <dbReference type="ChEBI" id="CHEBI:15377"/>
        <dbReference type="ChEBI" id="CHEBI:78784"/>
        <dbReference type="ChEBI" id="CHEBI:78827"/>
        <dbReference type="EC" id="4.2.1.59"/>
    </reaction>
</comment>
<comment type="subcellular location">
    <subcellularLocation>
        <location evidence="1">Cytoplasm</location>
    </subcellularLocation>
</comment>
<comment type="similarity">
    <text evidence="1">Belongs to the thioester dehydratase family. FabZ subfamily.</text>
</comment>
<organism>
    <name type="scientific">Clostridium botulinum (strain Loch Maree / Type A3)</name>
    <dbReference type="NCBI Taxonomy" id="498214"/>
    <lineage>
        <taxon>Bacteria</taxon>
        <taxon>Bacillati</taxon>
        <taxon>Bacillota</taxon>
        <taxon>Clostridia</taxon>
        <taxon>Eubacteriales</taxon>
        <taxon>Clostridiaceae</taxon>
        <taxon>Clostridium</taxon>
    </lineage>
</organism>
<accession>B1KU67</accession>
<gene>
    <name evidence="1" type="primary">fabZ</name>
    <name type="ordered locus">CLK_3070</name>
</gene>
<reference key="1">
    <citation type="journal article" date="2007" name="PLoS ONE">
        <title>Analysis of the neurotoxin complex genes in Clostridium botulinum A1-A4 and B1 strains: BoNT/A3, /Ba4 and /B1 clusters are located within plasmids.</title>
        <authorList>
            <person name="Smith T.J."/>
            <person name="Hill K.K."/>
            <person name="Foley B.T."/>
            <person name="Detter J.C."/>
            <person name="Munk A.C."/>
            <person name="Bruce D.C."/>
            <person name="Doggett N.A."/>
            <person name="Smith L.A."/>
            <person name="Marks J.D."/>
            <person name="Xie G."/>
            <person name="Brettin T.S."/>
        </authorList>
    </citation>
    <scope>NUCLEOTIDE SEQUENCE [LARGE SCALE GENOMIC DNA]</scope>
    <source>
        <strain>Loch Maree / Type A3</strain>
    </source>
</reference>
<keyword id="KW-0963">Cytoplasm</keyword>
<keyword id="KW-0441">Lipid A biosynthesis</keyword>
<keyword id="KW-0444">Lipid biosynthesis</keyword>
<keyword id="KW-0443">Lipid metabolism</keyword>
<keyword id="KW-0456">Lyase</keyword>
<name>FABZ_CLOBM</name>
<evidence type="ECO:0000255" key="1">
    <source>
        <dbReference type="HAMAP-Rule" id="MF_00406"/>
    </source>
</evidence>
<sequence>MEKFLDINEIKKIIPHRYPFLLVDKITELEEGKSAVGYKNVTANEYFFNGHFPEEPVMPGVLIIEALAQVGAVAILSKEEFKGKIAYFGGINKAKFRKKVVPGDVLRLSIELTKIKGVAGVGKAVATVDGKVVAEAELLFVIGK</sequence>
<feature type="chain" id="PRO_0000340769" description="3-hydroxyacyl-[acyl-carrier-protein] dehydratase FabZ">
    <location>
        <begin position="1"/>
        <end position="144"/>
    </location>
</feature>
<feature type="active site" evidence="1">
    <location>
        <position position="51"/>
    </location>
</feature>
<dbReference type="EC" id="4.2.1.59" evidence="1"/>
<dbReference type="EMBL" id="CP000962">
    <property type="protein sequence ID" value="ACA56976.1"/>
    <property type="molecule type" value="Genomic_DNA"/>
</dbReference>
<dbReference type="RefSeq" id="WP_012344774.1">
    <property type="nucleotide sequence ID" value="NC_010520.1"/>
</dbReference>
<dbReference type="SMR" id="B1KU67"/>
<dbReference type="KEGG" id="cbl:CLK_3070"/>
<dbReference type="HOGENOM" id="CLU_078912_3_0_9"/>
<dbReference type="GO" id="GO:0005737">
    <property type="term" value="C:cytoplasm"/>
    <property type="evidence" value="ECO:0007669"/>
    <property type="project" value="UniProtKB-SubCell"/>
</dbReference>
<dbReference type="GO" id="GO:0016020">
    <property type="term" value="C:membrane"/>
    <property type="evidence" value="ECO:0007669"/>
    <property type="project" value="GOC"/>
</dbReference>
<dbReference type="GO" id="GO:0019171">
    <property type="term" value="F:(3R)-hydroxyacyl-[acyl-carrier-protein] dehydratase activity"/>
    <property type="evidence" value="ECO:0007669"/>
    <property type="project" value="UniProtKB-EC"/>
</dbReference>
<dbReference type="GO" id="GO:0006633">
    <property type="term" value="P:fatty acid biosynthetic process"/>
    <property type="evidence" value="ECO:0007669"/>
    <property type="project" value="UniProtKB-UniRule"/>
</dbReference>
<dbReference type="GO" id="GO:0009245">
    <property type="term" value="P:lipid A biosynthetic process"/>
    <property type="evidence" value="ECO:0007669"/>
    <property type="project" value="UniProtKB-UniRule"/>
</dbReference>
<dbReference type="CDD" id="cd01288">
    <property type="entry name" value="FabZ"/>
    <property type="match status" value="1"/>
</dbReference>
<dbReference type="FunFam" id="3.10.129.10:FF:000001">
    <property type="entry name" value="3-hydroxyacyl-[acyl-carrier-protein] dehydratase FabZ"/>
    <property type="match status" value="1"/>
</dbReference>
<dbReference type="Gene3D" id="3.10.129.10">
    <property type="entry name" value="Hotdog Thioesterase"/>
    <property type="match status" value="1"/>
</dbReference>
<dbReference type="HAMAP" id="MF_00406">
    <property type="entry name" value="FabZ"/>
    <property type="match status" value="1"/>
</dbReference>
<dbReference type="InterPro" id="IPR013114">
    <property type="entry name" value="FabA_FabZ"/>
</dbReference>
<dbReference type="InterPro" id="IPR010084">
    <property type="entry name" value="FabZ"/>
</dbReference>
<dbReference type="InterPro" id="IPR029069">
    <property type="entry name" value="HotDog_dom_sf"/>
</dbReference>
<dbReference type="NCBIfam" id="TIGR01750">
    <property type="entry name" value="fabZ"/>
    <property type="match status" value="1"/>
</dbReference>
<dbReference type="NCBIfam" id="NF000582">
    <property type="entry name" value="PRK00006.1"/>
    <property type="match status" value="1"/>
</dbReference>
<dbReference type="PANTHER" id="PTHR30272">
    <property type="entry name" value="3-HYDROXYACYL-[ACYL-CARRIER-PROTEIN] DEHYDRATASE"/>
    <property type="match status" value="1"/>
</dbReference>
<dbReference type="PANTHER" id="PTHR30272:SF1">
    <property type="entry name" value="3-HYDROXYACYL-[ACYL-CARRIER-PROTEIN] DEHYDRATASE"/>
    <property type="match status" value="1"/>
</dbReference>
<dbReference type="Pfam" id="PF07977">
    <property type="entry name" value="FabA"/>
    <property type="match status" value="1"/>
</dbReference>
<dbReference type="SUPFAM" id="SSF54637">
    <property type="entry name" value="Thioesterase/thiol ester dehydrase-isomerase"/>
    <property type="match status" value="1"/>
</dbReference>
<protein>
    <recommendedName>
        <fullName evidence="1">3-hydroxyacyl-[acyl-carrier-protein] dehydratase FabZ</fullName>
        <ecNumber evidence="1">4.2.1.59</ecNumber>
    </recommendedName>
    <alternativeName>
        <fullName evidence="1">(3R)-hydroxymyristoyl-[acyl-carrier-protein] dehydratase</fullName>
        <shortName evidence="1">(3R)-hydroxymyristoyl-ACP dehydrase</shortName>
    </alternativeName>
    <alternativeName>
        <fullName evidence="1">Beta-hydroxyacyl-ACP dehydratase</fullName>
    </alternativeName>
</protein>